<feature type="signal peptide">
    <location>
        <begin position="1"/>
        <end position="23"/>
    </location>
</feature>
<feature type="chain" id="PRO_0000016762" description="Platelet-derived growth factor receptor alpha">
    <location>
        <begin position="24"/>
        <end position="1088"/>
    </location>
</feature>
<feature type="topological domain" description="Extracellular" evidence="4">
    <location>
        <begin position="24"/>
        <end position="527"/>
    </location>
</feature>
<feature type="transmembrane region" description="Helical" evidence="4">
    <location>
        <begin position="528"/>
        <end position="548"/>
    </location>
</feature>
<feature type="topological domain" description="Cytoplasmic" evidence="4">
    <location>
        <begin position="549"/>
        <end position="1088"/>
    </location>
</feature>
<feature type="domain" description="Ig-like C2-type 1">
    <location>
        <begin position="24"/>
        <end position="112"/>
    </location>
</feature>
<feature type="domain" description="Ig-like C2-type 2">
    <location>
        <begin position="116"/>
        <end position="200"/>
    </location>
</feature>
<feature type="domain" description="Ig-like C2-type 3">
    <location>
        <begin position="201"/>
        <end position="305"/>
    </location>
</feature>
<feature type="domain" description="Ig-like C2-type 4">
    <location>
        <begin position="318"/>
        <end position="409"/>
    </location>
</feature>
<feature type="domain" description="Ig-like C2-type 5">
    <location>
        <begin position="413"/>
        <end position="516"/>
    </location>
</feature>
<feature type="domain" description="Protein kinase" evidence="6">
    <location>
        <begin position="592"/>
        <end position="953"/>
    </location>
</feature>
<feature type="region of interest" description="Disordered" evidence="8">
    <location>
        <begin position="1017"/>
        <end position="1088"/>
    </location>
</feature>
<feature type="compositionally biased region" description="Polar residues" evidence="8">
    <location>
        <begin position="1040"/>
        <end position="1058"/>
    </location>
</feature>
<feature type="compositionally biased region" description="Acidic residues" evidence="8">
    <location>
        <begin position="1064"/>
        <end position="1088"/>
    </location>
</feature>
<feature type="active site" description="Proton acceptor" evidence="6 7">
    <location>
        <position position="817"/>
    </location>
</feature>
<feature type="binding site" evidence="6">
    <location>
        <begin position="598"/>
        <end position="606"/>
    </location>
    <ligand>
        <name>ATP</name>
        <dbReference type="ChEBI" id="CHEBI:30616"/>
    </ligand>
</feature>
<feature type="binding site" evidence="6">
    <location>
        <position position="626"/>
    </location>
    <ligand>
        <name>ATP</name>
        <dbReference type="ChEBI" id="CHEBI:30616"/>
    </ligand>
</feature>
<feature type="modified residue" description="Phosphotyrosine; by autocatalysis" evidence="2">
    <location>
        <position position="571"/>
    </location>
</feature>
<feature type="modified residue" description="Phosphotyrosine; by autocatalysis" evidence="2">
    <location>
        <position position="573"/>
    </location>
</feature>
<feature type="modified residue" description="Phosphotyrosine; by autocatalysis" evidence="2">
    <location>
        <position position="719"/>
    </location>
</feature>
<feature type="modified residue" description="Phosphotyrosine; by autocatalysis" evidence="2">
    <location>
        <position position="730"/>
    </location>
</feature>
<feature type="modified residue" description="Phosphotyrosine; by autocatalysis" evidence="2">
    <location>
        <position position="741"/>
    </location>
</feature>
<feature type="modified residue" description="Phosphotyrosine; by autocatalysis" evidence="2">
    <location>
        <position position="753"/>
    </location>
</feature>
<feature type="modified residue" description="Phosphotyrosine; by autocatalysis" evidence="2">
    <location>
        <position position="761"/>
    </location>
</feature>
<feature type="modified residue" description="Phosphotyrosine; by autocatalysis" evidence="2">
    <location>
        <position position="767"/>
    </location>
</feature>
<feature type="modified residue" description="Phosphotyrosine; by autocatalysis" evidence="1">
    <location>
        <position position="848"/>
    </location>
</feature>
<feature type="modified residue" description="Phosphotyrosine; by autocatalysis" evidence="2">
    <location>
        <position position="987"/>
    </location>
</feature>
<feature type="modified residue" description="Phosphotyrosine; by autocatalysis" evidence="2">
    <location>
        <position position="1017"/>
    </location>
</feature>
<feature type="glycosylation site" description="N-linked (GlcNAc...) asparagine" evidence="4">
    <location>
        <position position="75"/>
    </location>
</feature>
<feature type="glycosylation site" description="N-linked (GlcNAc...) asparagine" evidence="4">
    <location>
        <position position="102"/>
    </location>
</feature>
<feature type="glycosylation site" description="N-linked (GlcNAc...) asparagine" evidence="4">
    <location>
        <position position="178"/>
    </location>
</feature>
<feature type="glycosylation site" description="N-linked (GlcNAc...) asparagine" evidence="4">
    <location>
        <position position="352"/>
    </location>
</feature>
<feature type="glycosylation site" description="N-linked (GlcNAc...) asparagine" evidence="4">
    <location>
        <position position="358"/>
    </location>
</feature>
<feature type="glycosylation site" description="N-linked (GlcNAc...) asparagine" evidence="4">
    <location>
        <position position="457"/>
    </location>
</feature>
<feature type="glycosylation site" description="N-linked (GlcNAc...) asparagine" evidence="4">
    <location>
        <position position="467"/>
    </location>
</feature>
<feature type="disulfide bond" evidence="5">
    <location>
        <begin position="48"/>
        <end position="99"/>
    </location>
</feature>
<feature type="disulfide bond" evidence="5">
    <location>
        <begin position="149"/>
        <end position="188"/>
    </location>
</feature>
<feature type="disulfide bond" evidence="5">
    <location>
        <begin position="234"/>
        <end position="289"/>
    </location>
</feature>
<feature type="disulfide bond" evidence="5">
    <location>
        <begin position="434"/>
        <end position="500"/>
    </location>
</feature>
<feature type="sequence conflict" description="In Ref. 2; CAA78488." evidence="9" ref="2">
    <original>L</original>
    <variation>R</variation>
    <location>
        <position position="150"/>
    </location>
</feature>
<feature type="sequence conflict" description="In Ref. 2; CAA78488." evidence="9" ref="2">
    <original>S</original>
    <variation>T</variation>
    <location>
        <position position="519"/>
    </location>
</feature>
<dbReference type="EC" id="2.7.10.1"/>
<dbReference type="EMBL" id="M63837">
    <property type="protein sequence ID" value="AAA40743.1"/>
    <property type="status" value="ALT_INIT"/>
    <property type="molecule type" value="mRNA"/>
</dbReference>
<dbReference type="EMBL" id="Z14118">
    <property type="protein sequence ID" value="CAA78488.1"/>
    <property type="molecule type" value="mRNA"/>
</dbReference>
<dbReference type="PIR" id="A34710">
    <property type="entry name" value="PFRTGA"/>
</dbReference>
<dbReference type="RefSeq" id="NP_036934.1">
    <property type="nucleotide sequence ID" value="NM_012802.1"/>
</dbReference>
<dbReference type="SMR" id="P20786"/>
<dbReference type="BioGRID" id="247307">
    <property type="interactions" value="1"/>
</dbReference>
<dbReference type="FunCoup" id="P20786">
    <property type="interactions" value="2598"/>
</dbReference>
<dbReference type="IntAct" id="P20786">
    <property type="interactions" value="1"/>
</dbReference>
<dbReference type="MINT" id="P20786"/>
<dbReference type="STRING" id="10116.ENSRNOP00000003077"/>
<dbReference type="ChEMBL" id="CHEMBL2111344"/>
<dbReference type="GlyCosmos" id="P20786">
    <property type="glycosylation" value="7 sites, No reported glycans"/>
</dbReference>
<dbReference type="GlyGen" id="P20786">
    <property type="glycosylation" value="7 sites"/>
</dbReference>
<dbReference type="iPTMnet" id="P20786"/>
<dbReference type="PhosphoSitePlus" id="P20786"/>
<dbReference type="jPOST" id="P20786"/>
<dbReference type="PaxDb" id="10116-ENSRNOP00000003077"/>
<dbReference type="GeneID" id="25267"/>
<dbReference type="KEGG" id="rno:25267"/>
<dbReference type="UCSC" id="RGD:3284">
    <property type="organism name" value="rat"/>
</dbReference>
<dbReference type="AGR" id="RGD:3284"/>
<dbReference type="CTD" id="5156"/>
<dbReference type="RGD" id="3284">
    <property type="gene designation" value="Pdgfra"/>
</dbReference>
<dbReference type="eggNOG" id="KOG0200">
    <property type="taxonomic scope" value="Eukaryota"/>
</dbReference>
<dbReference type="InParanoid" id="P20786"/>
<dbReference type="OrthoDB" id="9936425at2759"/>
<dbReference type="PhylomeDB" id="P20786"/>
<dbReference type="BRENDA" id="2.7.10.1">
    <property type="organism ID" value="5301"/>
</dbReference>
<dbReference type="Reactome" id="R-RNO-1257604">
    <property type="pathway name" value="PIP3 activates AKT signaling"/>
</dbReference>
<dbReference type="Reactome" id="R-RNO-186763">
    <property type="pathway name" value="Downstream signal transduction"/>
</dbReference>
<dbReference type="Reactome" id="R-RNO-186797">
    <property type="pathway name" value="Signaling by PDGF"/>
</dbReference>
<dbReference type="Reactome" id="R-RNO-5673001">
    <property type="pathway name" value="RAF/MAP kinase cascade"/>
</dbReference>
<dbReference type="Reactome" id="R-RNO-6811558">
    <property type="pathway name" value="PI5P, PP2A and IER3 Regulate PI3K/AKT Signaling"/>
</dbReference>
<dbReference type="PRO" id="PR:P20786"/>
<dbReference type="Proteomes" id="UP000002494">
    <property type="component" value="Unplaced"/>
</dbReference>
<dbReference type="GO" id="GO:0030424">
    <property type="term" value="C:axon"/>
    <property type="evidence" value="ECO:0000314"/>
    <property type="project" value="RGD"/>
</dbReference>
<dbReference type="GO" id="GO:0009986">
    <property type="term" value="C:cell surface"/>
    <property type="evidence" value="ECO:0000266"/>
    <property type="project" value="RGD"/>
</dbReference>
<dbReference type="GO" id="GO:0005929">
    <property type="term" value="C:cilium"/>
    <property type="evidence" value="ECO:0000250"/>
    <property type="project" value="UniProtKB"/>
</dbReference>
<dbReference type="GO" id="GO:0005737">
    <property type="term" value="C:cytoplasm"/>
    <property type="evidence" value="ECO:0000314"/>
    <property type="project" value="UniProtKB"/>
</dbReference>
<dbReference type="GO" id="GO:0009897">
    <property type="term" value="C:external side of plasma membrane"/>
    <property type="evidence" value="ECO:0000266"/>
    <property type="project" value="RGD"/>
</dbReference>
<dbReference type="GO" id="GO:0005794">
    <property type="term" value="C:Golgi apparatus"/>
    <property type="evidence" value="ECO:0000250"/>
    <property type="project" value="UniProtKB"/>
</dbReference>
<dbReference type="GO" id="GO:0005902">
    <property type="term" value="C:microvillus"/>
    <property type="evidence" value="ECO:0000266"/>
    <property type="project" value="RGD"/>
</dbReference>
<dbReference type="GO" id="GO:0005634">
    <property type="term" value="C:nucleus"/>
    <property type="evidence" value="ECO:0000314"/>
    <property type="project" value="UniProtKB"/>
</dbReference>
<dbReference type="GO" id="GO:0005886">
    <property type="term" value="C:plasma membrane"/>
    <property type="evidence" value="ECO:0000314"/>
    <property type="project" value="UniProtKB"/>
</dbReference>
<dbReference type="GO" id="GO:1990270">
    <property type="term" value="C:platelet-derived growth factor receptor-ligand complex"/>
    <property type="evidence" value="ECO:0000266"/>
    <property type="project" value="RGD"/>
</dbReference>
<dbReference type="GO" id="GO:0032991">
    <property type="term" value="C:protein-containing complex"/>
    <property type="evidence" value="ECO:0000266"/>
    <property type="project" value="RGD"/>
</dbReference>
<dbReference type="GO" id="GO:0043235">
    <property type="term" value="C:receptor complex"/>
    <property type="evidence" value="ECO:0000318"/>
    <property type="project" value="GO_Central"/>
</dbReference>
<dbReference type="GO" id="GO:0005524">
    <property type="term" value="F:ATP binding"/>
    <property type="evidence" value="ECO:0007669"/>
    <property type="project" value="UniProtKB-KW"/>
</dbReference>
<dbReference type="GO" id="GO:0043548">
    <property type="term" value="F:phosphatidylinositol 3-kinase binding"/>
    <property type="evidence" value="ECO:0000353"/>
    <property type="project" value="RGD"/>
</dbReference>
<dbReference type="GO" id="GO:0160185">
    <property type="term" value="F:phospholipase C activator activity"/>
    <property type="evidence" value="ECO:0000266"/>
    <property type="project" value="RGD"/>
</dbReference>
<dbReference type="GO" id="GO:0005018">
    <property type="term" value="F:platelet-derived growth factor alpha-receptor activity"/>
    <property type="evidence" value="ECO:0000314"/>
    <property type="project" value="RGD"/>
</dbReference>
<dbReference type="GO" id="GO:0048407">
    <property type="term" value="F:platelet-derived growth factor binding"/>
    <property type="evidence" value="ECO:0000266"/>
    <property type="project" value="RGD"/>
</dbReference>
<dbReference type="GO" id="GO:0005161">
    <property type="term" value="F:platelet-derived growth factor receptor binding"/>
    <property type="evidence" value="ECO:0000266"/>
    <property type="project" value="RGD"/>
</dbReference>
<dbReference type="GO" id="GO:0042803">
    <property type="term" value="F:protein homodimerization activity"/>
    <property type="evidence" value="ECO:0000250"/>
    <property type="project" value="UniProtKB"/>
</dbReference>
<dbReference type="GO" id="GO:0004672">
    <property type="term" value="F:protein kinase activity"/>
    <property type="evidence" value="ECO:0000266"/>
    <property type="project" value="RGD"/>
</dbReference>
<dbReference type="GO" id="GO:0044877">
    <property type="term" value="F:protein-containing complex binding"/>
    <property type="evidence" value="ECO:0000266"/>
    <property type="project" value="RGD"/>
</dbReference>
<dbReference type="GO" id="GO:0004714">
    <property type="term" value="F:transmembrane receptor protein tyrosine kinase activity"/>
    <property type="evidence" value="ECO:0000266"/>
    <property type="project" value="RGD"/>
</dbReference>
<dbReference type="GO" id="GO:0038085">
    <property type="term" value="F:vascular endothelial growth factor binding"/>
    <property type="evidence" value="ECO:0000266"/>
    <property type="project" value="RGD"/>
</dbReference>
<dbReference type="GO" id="GO:0005021">
    <property type="term" value="F:vascular endothelial growth factor receptor activity"/>
    <property type="evidence" value="ECO:0000250"/>
    <property type="project" value="UniProtKB"/>
</dbReference>
<dbReference type="GO" id="GO:0030325">
    <property type="term" value="P:adrenal gland development"/>
    <property type="evidence" value="ECO:0000266"/>
    <property type="project" value="RGD"/>
</dbReference>
<dbReference type="GO" id="GO:0009653">
    <property type="term" value="P:anatomical structure morphogenesis"/>
    <property type="evidence" value="ECO:0000266"/>
    <property type="project" value="RGD"/>
</dbReference>
<dbReference type="GO" id="GO:0009887">
    <property type="term" value="P:animal organ morphogenesis"/>
    <property type="evidence" value="ECO:0000266"/>
    <property type="project" value="RGD"/>
</dbReference>
<dbReference type="GO" id="GO:0055003">
    <property type="term" value="P:cardiac myofibril assembly"/>
    <property type="evidence" value="ECO:0000250"/>
    <property type="project" value="UniProtKB"/>
</dbReference>
<dbReference type="GO" id="GO:0060326">
    <property type="term" value="P:cell chemotaxis"/>
    <property type="evidence" value="ECO:0000266"/>
    <property type="project" value="RGD"/>
</dbReference>
<dbReference type="GO" id="GO:0016477">
    <property type="term" value="P:cell migration"/>
    <property type="evidence" value="ECO:0000266"/>
    <property type="project" value="RGD"/>
</dbReference>
<dbReference type="GO" id="GO:0007169">
    <property type="term" value="P:cell surface receptor protein tyrosine kinase signaling pathway"/>
    <property type="evidence" value="ECO:0000318"/>
    <property type="project" value="GO_Central"/>
</dbReference>
<dbReference type="GO" id="GO:0071230">
    <property type="term" value="P:cellular response to amino acid stimulus"/>
    <property type="evidence" value="ECO:0000266"/>
    <property type="project" value="RGD"/>
</dbReference>
<dbReference type="GO" id="GO:0044344">
    <property type="term" value="P:cellular response to fibroblast growth factor stimulus"/>
    <property type="evidence" value="ECO:0000270"/>
    <property type="project" value="RGD"/>
</dbReference>
<dbReference type="GO" id="GO:0071347">
    <property type="term" value="P:cellular response to interleukin-1"/>
    <property type="evidence" value="ECO:0000270"/>
    <property type="project" value="RGD"/>
</dbReference>
<dbReference type="GO" id="GO:0034614">
    <property type="term" value="P:cellular response to reactive oxygen species"/>
    <property type="evidence" value="ECO:0000266"/>
    <property type="project" value="RGD"/>
</dbReference>
<dbReference type="GO" id="GO:0048701">
    <property type="term" value="P:embryonic cranial skeleton morphogenesis"/>
    <property type="evidence" value="ECO:0000250"/>
    <property type="project" value="UniProtKB"/>
</dbReference>
<dbReference type="GO" id="GO:0048557">
    <property type="term" value="P:embryonic digestive tract morphogenesis"/>
    <property type="evidence" value="ECO:0000250"/>
    <property type="project" value="UniProtKB"/>
</dbReference>
<dbReference type="GO" id="GO:0048704">
    <property type="term" value="P:embryonic skeletal system morphogenesis"/>
    <property type="evidence" value="ECO:0000250"/>
    <property type="project" value="UniProtKB"/>
</dbReference>
<dbReference type="GO" id="GO:0008210">
    <property type="term" value="P:estrogen metabolic process"/>
    <property type="evidence" value="ECO:0000266"/>
    <property type="project" value="RGD"/>
</dbReference>
<dbReference type="GO" id="GO:0030198">
    <property type="term" value="P:extracellular matrix organization"/>
    <property type="evidence" value="ECO:0000266"/>
    <property type="project" value="RGD"/>
</dbReference>
<dbReference type="GO" id="GO:0060325">
    <property type="term" value="P:face morphogenesis"/>
    <property type="evidence" value="ECO:0000266"/>
    <property type="project" value="RGD"/>
</dbReference>
<dbReference type="GO" id="GO:0008585">
    <property type="term" value="P:female gonad development"/>
    <property type="evidence" value="ECO:0000266"/>
    <property type="project" value="RGD"/>
</dbReference>
<dbReference type="GO" id="GO:0002244">
    <property type="term" value="P:hematopoietic progenitor cell differentiation"/>
    <property type="evidence" value="ECO:0000266"/>
    <property type="project" value="RGD"/>
</dbReference>
<dbReference type="GO" id="GO:0001701">
    <property type="term" value="P:in utero embryonic development"/>
    <property type="evidence" value="ECO:0000266"/>
    <property type="project" value="RGD"/>
</dbReference>
<dbReference type="GO" id="GO:0048839">
    <property type="term" value="P:inner ear development"/>
    <property type="evidence" value="ECO:0000270"/>
    <property type="project" value="RGD"/>
</dbReference>
<dbReference type="GO" id="GO:0033327">
    <property type="term" value="P:Leydig cell differentiation"/>
    <property type="evidence" value="ECO:0000266"/>
    <property type="project" value="RGD"/>
</dbReference>
<dbReference type="GO" id="GO:0030324">
    <property type="term" value="P:lung development"/>
    <property type="evidence" value="ECO:0000266"/>
    <property type="project" value="RGD"/>
</dbReference>
<dbReference type="GO" id="GO:0060437">
    <property type="term" value="P:lung growth"/>
    <property type="evidence" value="ECO:0000315"/>
    <property type="project" value="RGD"/>
</dbReference>
<dbReference type="GO" id="GO:0001553">
    <property type="term" value="P:luteinization"/>
    <property type="evidence" value="ECO:0000250"/>
    <property type="project" value="UniProtKB"/>
</dbReference>
<dbReference type="GO" id="GO:0030539">
    <property type="term" value="P:male genitalia development"/>
    <property type="evidence" value="ECO:0000266"/>
    <property type="project" value="RGD"/>
</dbReference>
<dbReference type="GO" id="GO:0008584">
    <property type="term" value="P:male gonad development"/>
    <property type="evidence" value="ECO:0000270"/>
    <property type="project" value="RGD"/>
</dbReference>
<dbReference type="GO" id="GO:0072277">
    <property type="term" value="P:metanephric glomerular capillary formation"/>
    <property type="evidence" value="ECO:0000250"/>
    <property type="project" value="UniProtKB"/>
</dbReference>
<dbReference type="GO" id="GO:0010544">
    <property type="term" value="P:negative regulation of platelet activation"/>
    <property type="evidence" value="ECO:0000250"/>
    <property type="project" value="UniProtKB"/>
</dbReference>
<dbReference type="GO" id="GO:0042475">
    <property type="term" value="P:odontogenesis of dentin-containing tooth"/>
    <property type="evidence" value="ECO:0000266"/>
    <property type="project" value="RGD"/>
</dbReference>
<dbReference type="GO" id="GO:0070527">
    <property type="term" value="P:platelet aggregation"/>
    <property type="evidence" value="ECO:0000250"/>
    <property type="project" value="UniProtKB"/>
</dbReference>
<dbReference type="GO" id="GO:0048008">
    <property type="term" value="P:platelet-derived growth factor receptor signaling pathway"/>
    <property type="evidence" value="ECO:0000250"/>
    <property type="project" value="UniProtKB"/>
</dbReference>
<dbReference type="GO" id="GO:0035790">
    <property type="term" value="P:platelet-derived growth factor receptor-alpha signaling pathway"/>
    <property type="evidence" value="ECO:0000266"/>
    <property type="project" value="RGD"/>
</dbReference>
<dbReference type="GO" id="GO:0061047">
    <property type="term" value="P:positive regulation of branching involved in lung morphogenesis"/>
    <property type="evidence" value="ECO:0000315"/>
    <property type="project" value="RGD"/>
</dbReference>
<dbReference type="GO" id="GO:0050850">
    <property type="term" value="P:positive regulation of calcium-mediated signaling"/>
    <property type="evidence" value="ECO:0000250"/>
    <property type="project" value="UniProtKB"/>
</dbReference>
<dbReference type="GO" id="GO:0030335">
    <property type="term" value="P:positive regulation of cell migration"/>
    <property type="evidence" value="ECO:0000250"/>
    <property type="project" value="UniProtKB"/>
</dbReference>
<dbReference type="GO" id="GO:0008284">
    <property type="term" value="P:positive regulation of cell population proliferation"/>
    <property type="evidence" value="ECO:0000315"/>
    <property type="project" value="RGD"/>
</dbReference>
<dbReference type="GO" id="GO:0038091">
    <property type="term" value="P:positive regulation of cell proliferation by VEGF-activated platelet derived growth factor receptor signaling pathway"/>
    <property type="evidence" value="ECO:0000266"/>
    <property type="project" value="RGD"/>
</dbReference>
<dbReference type="GO" id="GO:0050921">
    <property type="term" value="P:positive regulation of chemotaxis"/>
    <property type="evidence" value="ECO:0000266"/>
    <property type="project" value="RGD"/>
</dbReference>
<dbReference type="GO" id="GO:0070374">
    <property type="term" value="P:positive regulation of ERK1 and ERK2 cascade"/>
    <property type="evidence" value="ECO:0000250"/>
    <property type="project" value="UniProtKB"/>
</dbReference>
<dbReference type="GO" id="GO:0048146">
    <property type="term" value="P:positive regulation of fibroblast proliferation"/>
    <property type="evidence" value="ECO:0000250"/>
    <property type="project" value="UniProtKB"/>
</dbReference>
<dbReference type="GO" id="GO:2000739">
    <property type="term" value="P:regulation of mesenchymal stem cell differentiation"/>
    <property type="evidence" value="ECO:0000250"/>
    <property type="project" value="UniProtKB"/>
</dbReference>
<dbReference type="GO" id="GO:0034097">
    <property type="term" value="P:response to cytokine"/>
    <property type="evidence" value="ECO:0000270"/>
    <property type="project" value="RGD"/>
</dbReference>
<dbReference type="GO" id="GO:0032355">
    <property type="term" value="P:response to estradiol"/>
    <property type="evidence" value="ECO:0000270"/>
    <property type="project" value="RGD"/>
</dbReference>
<dbReference type="GO" id="GO:0043627">
    <property type="term" value="P:response to estrogen"/>
    <property type="evidence" value="ECO:0000270"/>
    <property type="project" value="RGD"/>
</dbReference>
<dbReference type="GO" id="GO:1904404">
    <property type="term" value="P:response to formaldehyde"/>
    <property type="evidence" value="ECO:0000270"/>
    <property type="project" value="RGD"/>
</dbReference>
<dbReference type="GO" id="GO:0009725">
    <property type="term" value="P:response to hormone"/>
    <property type="evidence" value="ECO:0000270"/>
    <property type="project" value="RGD"/>
</dbReference>
<dbReference type="GO" id="GO:0055093">
    <property type="term" value="P:response to hyperoxia"/>
    <property type="evidence" value="ECO:0000270"/>
    <property type="project" value="RGD"/>
</dbReference>
<dbReference type="GO" id="GO:0061298">
    <property type="term" value="P:retina vasculature development in camera-type eye"/>
    <property type="evidence" value="ECO:0000250"/>
    <property type="project" value="UniProtKB"/>
</dbReference>
<dbReference type="GO" id="GO:0060021">
    <property type="term" value="P:roof of mouth development"/>
    <property type="evidence" value="ECO:0000266"/>
    <property type="project" value="RGD"/>
</dbReference>
<dbReference type="GO" id="GO:0023019">
    <property type="term" value="P:signal transduction involved in regulation of gene expression"/>
    <property type="evidence" value="ECO:0000266"/>
    <property type="project" value="RGD"/>
</dbReference>
<dbReference type="GO" id="GO:0048705">
    <property type="term" value="P:skeletal system morphogenesis"/>
    <property type="evidence" value="ECO:0000266"/>
    <property type="project" value="RGD"/>
</dbReference>
<dbReference type="GO" id="GO:0050872">
    <property type="term" value="P:white fat cell differentiation"/>
    <property type="evidence" value="ECO:0000266"/>
    <property type="project" value="RGD"/>
</dbReference>
<dbReference type="GO" id="GO:0042060">
    <property type="term" value="P:wound healing"/>
    <property type="evidence" value="ECO:0000266"/>
    <property type="project" value="RGD"/>
</dbReference>
<dbReference type="CDD" id="cd05859">
    <property type="entry name" value="Ig4_PDGFR"/>
    <property type="match status" value="1"/>
</dbReference>
<dbReference type="CDD" id="cd05105">
    <property type="entry name" value="PTKc_PDGFR_alpha"/>
    <property type="match status" value="1"/>
</dbReference>
<dbReference type="FunFam" id="2.60.40.10:FF:000720">
    <property type="entry name" value="Platelet-derived growth factor receptor alpha"/>
    <property type="match status" value="1"/>
</dbReference>
<dbReference type="FunFam" id="2.60.40.10:FF:000725">
    <property type="entry name" value="Platelet-derived growth factor receptor alpha"/>
    <property type="match status" value="1"/>
</dbReference>
<dbReference type="FunFam" id="2.60.40.10:FF:000776">
    <property type="entry name" value="Platelet-derived growth factor receptor alpha"/>
    <property type="match status" value="1"/>
</dbReference>
<dbReference type="FunFam" id="2.60.40.10:FF:000832">
    <property type="entry name" value="Platelet-derived growth factor receptor alpha"/>
    <property type="match status" value="1"/>
</dbReference>
<dbReference type="FunFam" id="3.30.200.20:FF:000025">
    <property type="entry name" value="Platelet-derived growth factor receptor alpha"/>
    <property type="match status" value="1"/>
</dbReference>
<dbReference type="FunFam" id="2.60.40.10:FF:000223">
    <property type="entry name" value="Platelet-derived growth factor receptor beta"/>
    <property type="match status" value="1"/>
</dbReference>
<dbReference type="FunFam" id="1.10.510.10:FF:001735">
    <property type="entry name" value="T0011027 isoform 1"/>
    <property type="match status" value="1"/>
</dbReference>
<dbReference type="Gene3D" id="2.60.40.10">
    <property type="entry name" value="Immunoglobulins"/>
    <property type="match status" value="5"/>
</dbReference>
<dbReference type="Gene3D" id="3.30.200.20">
    <property type="entry name" value="Phosphorylase Kinase, domain 1"/>
    <property type="match status" value="1"/>
</dbReference>
<dbReference type="Gene3D" id="1.10.510.10">
    <property type="entry name" value="Transferase(Phosphotransferase) domain 1"/>
    <property type="match status" value="1"/>
</dbReference>
<dbReference type="InterPro" id="IPR007110">
    <property type="entry name" value="Ig-like_dom"/>
</dbReference>
<dbReference type="InterPro" id="IPR036179">
    <property type="entry name" value="Ig-like_dom_sf"/>
</dbReference>
<dbReference type="InterPro" id="IPR013783">
    <property type="entry name" value="Ig-like_fold"/>
</dbReference>
<dbReference type="InterPro" id="IPR013098">
    <property type="entry name" value="Ig_I-set"/>
</dbReference>
<dbReference type="InterPro" id="IPR003599">
    <property type="entry name" value="Ig_sub"/>
</dbReference>
<dbReference type="InterPro" id="IPR003598">
    <property type="entry name" value="Ig_sub2"/>
</dbReference>
<dbReference type="InterPro" id="IPR011009">
    <property type="entry name" value="Kinase-like_dom_sf"/>
</dbReference>
<dbReference type="InterPro" id="IPR027290">
    <property type="entry name" value="PDGFRA"/>
</dbReference>
<dbReference type="InterPro" id="IPR000719">
    <property type="entry name" value="Prot_kinase_dom"/>
</dbReference>
<dbReference type="InterPro" id="IPR017441">
    <property type="entry name" value="Protein_kinase_ATP_BS"/>
</dbReference>
<dbReference type="InterPro" id="IPR050122">
    <property type="entry name" value="RTK"/>
</dbReference>
<dbReference type="InterPro" id="IPR001245">
    <property type="entry name" value="Ser-Thr/Tyr_kinase_cat_dom"/>
</dbReference>
<dbReference type="InterPro" id="IPR008266">
    <property type="entry name" value="Tyr_kinase_AS"/>
</dbReference>
<dbReference type="InterPro" id="IPR020635">
    <property type="entry name" value="Tyr_kinase_cat_dom"/>
</dbReference>
<dbReference type="InterPro" id="IPR001824">
    <property type="entry name" value="Tyr_kinase_rcpt_3_CS"/>
</dbReference>
<dbReference type="PANTHER" id="PTHR24416:SF52">
    <property type="entry name" value="PLATELET-DERIVED GROWTH FACTOR RECEPTOR ALPHA"/>
    <property type="match status" value="1"/>
</dbReference>
<dbReference type="PANTHER" id="PTHR24416">
    <property type="entry name" value="TYROSINE-PROTEIN KINASE RECEPTOR"/>
    <property type="match status" value="1"/>
</dbReference>
<dbReference type="Pfam" id="PF07679">
    <property type="entry name" value="I-set"/>
    <property type="match status" value="2"/>
</dbReference>
<dbReference type="Pfam" id="PF25305">
    <property type="entry name" value="Ig_PDGFR_d4"/>
    <property type="match status" value="1"/>
</dbReference>
<dbReference type="Pfam" id="PF07714">
    <property type="entry name" value="PK_Tyr_Ser-Thr"/>
    <property type="match status" value="1"/>
</dbReference>
<dbReference type="PIRSF" id="PIRSF500950">
    <property type="entry name" value="Alpha-PDGF_receptor"/>
    <property type="match status" value="1"/>
</dbReference>
<dbReference type="PIRSF" id="PIRSF000615">
    <property type="entry name" value="TyrPK_CSF1-R"/>
    <property type="match status" value="1"/>
</dbReference>
<dbReference type="PRINTS" id="PR01832">
    <property type="entry name" value="VEGFRECEPTOR"/>
</dbReference>
<dbReference type="SMART" id="SM00409">
    <property type="entry name" value="IG"/>
    <property type="match status" value="4"/>
</dbReference>
<dbReference type="SMART" id="SM00408">
    <property type="entry name" value="IGc2"/>
    <property type="match status" value="3"/>
</dbReference>
<dbReference type="SMART" id="SM00220">
    <property type="entry name" value="S_TKc"/>
    <property type="match status" value="1"/>
</dbReference>
<dbReference type="SMART" id="SM00219">
    <property type="entry name" value="TyrKc"/>
    <property type="match status" value="1"/>
</dbReference>
<dbReference type="SUPFAM" id="SSF48726">
    <property type="entry name" value="Immunoglobulin"/>
    <property type="match status" value="4"/>
</dbReference>
<dbReference type="SUPFAM" id="SSF56112">
    <property type="entry name" value="Protein kinase-like (PK-like)"/>
    <property type="match status" value="1"/>
</dbReference>
<dbReference type="PROSITE" id="PS50835">
    <property type="entry name" value="IG_LIKE"/>
    <property type="match status" value="3"/>
</dbReference>
<dbReference type="PROSITE" id="PS00107">
    <property type="entry name" value="PROTEIN_KINASE_ATP"/>
    <property type="match status" value="1"/>
</dbReference>
<dbReference type="PROSITE" id="PS50011">
    <property type="entry name" value="PROTEIN_KINASE_DOM"/>
    <property type="match status" value="1"/>
</dbReference>
<dbReference type="PROSITE" id="PS00109">
    <property type="entry name" value="PROTEIN_KINASE_TYR"/>
    <property type="match status" value="1"/>
</dbReference>
<dbReference type="PROSITE" id="PS00240">
    <property type="entry name" value="RECEPTOR_TYR_KIN_III"/>
    <property type="match status" value="1"/>
</dbReference>
<comment type="function">
    <text evidence="2 3">Tyrosine-protein kinase that acts as a cell-surface receptor for PDGFA, PDGFB and PDGFC and plays an essential role in the regulation of embryonic development, cell proliferation, survival and chemotaxis. Depending on the context, promotes or inhibits cell proliferation and cell migration. Plays an important role in the differentiation of bone marrow-derived mesenchymal stem cells. Required for normal skeleton development and cephalic closure during embryonic development. Required for normal development of the mucosa lining the gastrointestinal tract, and for recruitment of mesenchymal cells and normal development of intestinal villi. Plays a role in cell migration and chemotaxis in wound healing. Plays a role in platelet activation, secretion of agonists from platelet granules, and in thrombin-induced platelet aggregation. Binding of its cognate ligands - homodimeric PDGFA, homodimeric PDGFB, heterodimers formed by PDGFA and PDGFB or homodimeric PDGFC -leads to the activation of several signaling cascades; the response depends on the nature of the bound ligand and is modulated by the formation of heterodimers between PDGFRA and PDGFRB. Phosphorylates PIK3R1, PLCG1, and PTPN11. Activation of PLCG1 leads to the production of the cellular signaling molecules diacylglycerol and inositol 1,4,5-trisphosphate, mobilization of cytosolic Ca(2+) and the activation of protein kinase C. Phosphorylates PIK3R1, the regulatory subunit of phosphatidylinositol 3-kinase, and thereby mediates activation of the AKT1 signaling pathway. Mediates activation of HRAS and of the MAP kinases MAPK1/ERK2 and/or MAPK3/ERK1. Promotes activation of STAT family members STAT1, STAT3 and STAT5A and/or STAT5B. Receptor signaling is down-regulated by protein phosphatases that dephosphorylate the receptor and its down-stream effectors, and by rapid internalization of the activated receptor (By similarity).</text>
</comment>
<comment type="catalytic activity">
    <reaction evidence="7">
        <text>L-tyrosyl-[protein] + ATP = O-phospho-L-tyrosyl-[protein] + ADP + H(+)</text>
        <dbReference type="Rhea" id="RHEA:10596"/>
        <dbReference type="Rhea" id="RHEA-COMP:10136"/>
        <dbReference type="Rhea" id="RHEA-COMP:20101"/>
        <dbReference type="ChEBI" id="CHEBI:15378"/>
        <dbReference type="ChEBI" id="CHEBI:30616"/>
        <dbReference type="ChEBI" id="CHEBI:46858"/>
        <dbReference type="ChEBI" id="CHEBI:61978"/>
        <dbReference type="ChEBI" id="CHEBI:456216"/>
        <dbReference type="EC" id="2.7.10.1"/>
    </reaction>
</comment>
<comment type="activity regulation">
    <text evidence="1">Present in an inactive conformation in the absence of bound ligand. Binding of PDGFA and/or PDGFB leads to dimerization and activation by autophosphorylation on tyrosine residues. Inhibited by imatinib, nilotinib and sorafenib (By similarity).</text>
</comment>
<comment type="subunit">
    <text evidence="2 3">Interacts with homodimeric PDGFA, PDGFB and PDGFC, and with heterodimers formed by PDGFA and PDGFB. Monomer in the absence of bound ligand. Interaction with dimeric PDGFA, PDGFB and/or PDGFC leads to receptor dimerization, where both PDGFRA homodimers and heterodimers with PDGFRB are observed. Interacts (tyrosine phosphorylated) with SHB (via SH2 domain). Interacts (tyrosine phosphorylated) with SHF (via SH2 domain). Interacts (tyrosine phosphorylated) with SRC (via SH2 domain). Interacts (tyrosine phosphorylated) with PIK3R1. Interacts (tyrosine phosphorylated) with PLCG1 (via SH2 domain). Interacts (tyrosine phosphorylated) with CRK, GRB2 and GRB7 (By similarity). Interacts with CD248; this interaction promotes PDGF receptor signaling pathway (By similarity).</text>
</comment>
<comment type="subcellular location">
    <subcellularLocation>
        <location evidence="2">Cell membrane</location>
        <topology evidence="2">Single-pass type I membrane protein</topology>
    </subcellularLocation>
    <subcellularLocation>
        <location evidence="3">Cell projection</location>
        <location evidence="3">Cilium</location>
    </subcellularLocation>
    <subcellularLocation>
        <location evidence="3">Golgi apparatus</location>
    </subcellularLocation>
</comment>
<comment type="PTM">
    <text evidence="3">Ubiquitinated, leading to its internalization and degradation.</text>
</comment>
<comment type="PTM">
    <text evidence="1">Autophosphorylated on tyrosine residues upon ligand binding. Autophosphorylation occurs in trans, i.e. one subunit of the dimeric receptor phosphorylates tyrosine residues on the other subunit. Phosphorylation at Tyr-730 and Tyr-741 is important for interaction with PIK3R1. Phosphorylation at Tyr-719 and Tyr-753 is important for interaction with PTPN11. Phosphorylation at Tyr-761 is important for interaction with CRK. Phosphorylation at Tyr-571 and Tyr-573 is important for interaction with SRC and SRC family members. Phosphorylation at Tyr-987 and Tyr-1017 is important for interaction with PLCG1 (By similarity).</text>
</comment>
<comment type="similarity">
    <text evidence="6">Belongs to the protein kinase superfamily. Tyr protein kinase family. CSF-1/PDGF receptor subfamily.</text>
</comment>
<comment type="sequence caution" evidence="9">
    <conflict type="erroneous initiation">
        <sequence resource="EMBL-CDS" id="AAA40743"/>
    </conflict>
</comment>
<protein>
    <recommendedName>
        <fullName>Platelet-derived growth factor receptor alpha</fullName>
        <shortName>PDGF-R-alpha</shortName>
        <shortName>PDGFR-alpha</shortName>
        <ecNumber>2.7.10.1</ecNumber>
    </recommendedName>
    <alternativeName>
        <fullName>Alpha platelet-derived growth factor receptor</fullName>
    </alternativeName>
    <alternativeName>
        <fullName>Alpha-type platelet-derived growth factor receptor</fullName>
    </alternativeName>
    <alternativeName>
        <fullName>CD140 antigen-like family member A</fullName>
    </alternativeName>
    <alternativeName>
        <fullName>Platelet-derived growth factor alpha receptor</fullName>
    </alternativeName>
    <cdAntigenName>CD140a</cdAntigenName>
</protein>
<name>PGFRA_RAT</name>
<reference key="1">
    <citation type="journal article" date="1990" name="Mol. Cell. Biol.">
        <title>Isolation and characterization of the alpha platelet-derived growth factor receptor from rat olfactory epithelium.</title>
        <authorList>
            <person name="Lee K.H."/>
            <person name="Bowen-Pope D.F."/>
            <person name="Reed R.R."/>
        </authorList>
    </citation>
    <scope>NUCLEOTIDE SEQUENCE [MRNA]</scope>
    <source>
        <strain>Sprague-Dawley</strain>
    </source>
</reference>
<reference key="2">
    <citation type="journal article" date="1993" name="Biochim. Biophys. Acta">
        <title>Conservation in sequence and affinity of human and rodent PDGF ligands and receptors.</title>
        <authorList>
            <person name="Herren B."/>
            <person name="Weyer K.A."/>
            <person name="Rouge M."/>
            <person name="Loetscher P."/>
            <person name="Pech M."/>
        </authorList>
    </citation>
    <scope>NUCLEOTIDE SEQUENCE [MRNA] OF 33-524</scope>
</reference>
<reference key="3">
    <citation type="submission" date="2007-07" db="UniProtKB">
        <authorList>
            <person name="Lubec G."/>
            <person name="Kang S.U."/>
        </authorList>
    </citation>
    <scope>PROTEIN SEQUENCE OF 833-840</scope>
    <scope>IDENTIFICATION BY MASS SPECTROMETRY</scope>
    <source>
        <strain>Sprague-Dawley</strain>
        <tissue>Brain</tissue>
    </source>
</reference>
<evidence type="ECO:0000250" key="1"/>
<evidence type="ECO:0000250" key="2">
    <source>
        <dbReference type="UniProtKB" id="P16234"/>
    </source>
</evidence>
<evidence type="ECO:0000250" key="3">
    <source>
        <dbReference type="UniProtKB" id="P26618"/>
    </source>
</evidence>
<evidence type="ECO:0000255" key="4"/>
<evidence type="ECO:0000255" key="5">
    <source>
        <dbReference type="PROSITE-ProRule" id="PRU00114"/>
    </source>
</evidence>
<evidence type="ECO:0000255" key="6">
    <source>
        <dbReference type="PROSITE-ProRule" id="PRU00159"/>
    </source>
</evidence>
<evidence type="ECO:0000255" key="7">
    <source>
        <dbReference type="PROSITE-ProRule" id="PRU10028"/>
    </source>
</evidence>
<evidence type="ECO:0000256" key="8">
    <source>
        <dbReference type="SAM" id="MobiDB-lite"/>
    </source>
</evidence>
<evidence type="ECO:0000305" key="9"/>
<sequence>MGTSQAFLVLSCLLTGPSLIVCQLLLPSILPNENEKIVPLSSSFSLRCFGESEVSWQHPMSEEEDPNVEIRTEENNSSLFVTVLEVVNASAAHTGWYTCYYNHTQTEESEIEGRHIYIYVPDPDMAFVPLGMTDSLVIVEEDDSAIIPCLTTDPDTEVTLHNNGRLVPASYDSRQGFNGTFSVGPYICEATVRGRTFKTSEFNVYALKATSELNLEMDTRQTVYKAGETIVVTCAVFNNEVVDLQWTYPGEVRNKGITMLEEIKLPSIKLVYTLTVPKATVKDSGDYECAARQATKEVKEMKTVTISVHEKGFVQIRPTFGHLETVNLHQVREFVVEVQAYPTPRISWLKDNLTLIENLTEITTDVQRSQETRYQSKLKLIRAKEEDSGHYTIIVQNDDDMKSYTFELSTLVPASILELVDDHHGSGGGQTVRCTAEGTPLPNIEWMICKDIKKCNNDTSWTVLASNVSNIITEFHQRGRSTVEGRVSFAKVEETIAVRCLAKNDLGIGNRELKLVAPSLRSELTVAAAVLVLLVIVIVSLIVLVVIWKQKPRYEIRWRVIESISPDGHEYIYVDPMQLPYDSRWEFPRDGLVLGRILGSGAFGKVVEGTAYGLSRSQPVMKVAVKMLKPTARSSEKQALMSELKIMTHLGPHLNIVNLLGACTKSGPIYIITEYCFYGDLVNYLHKNRDSFMSRHPEKPKKDLDIFGLNPADESTRSYVILSFENNGDYVDMKQADTTQYVPMLERKEVSKYSDIQRSLYDRPASYKKKSMLDSEAKNLLSDDDSEGLTLLDLLSFTYQVARGMEFLASKNCVHRDLAARNVLLAQGKIVKICDFGLARDIMHDSNYVSKGSTFLPVKWMAPESIFDNLYTTLSDVWSYGVLLWEIFSLGGTPYPGMMVDSTFYNKIKSGYRMAKPDHATSEVYEIMVQCWNSEPEKRPSFYHLSEIVENLLPGQYKKSYEKIHLDFLKSDHPAVARMRVDSDNAYIGVTYKNEEDKLKEWEGGLDEQRLSADSGYIIPLPDIDPVPEEEDLGKRNRHSSQTSEESAIETGSSSSTFIKREDETIEDIDMMDDIGIDSSDLVEDSFL</sequence>
<organism>
    <name type="scientific">Rattus norvegicus</name>
    <name type="common">Rat</name>
    <dbReference type="NCBI Taxonomy" id="10116"/>
    <lineage>
        <taxon>Eukaryota</taxon>
        <taxon>Metazoa</taxon>
        <taxon>Chordata</taxon>
        <taxon>Craniata</taxon>
        <taxon>Vertebrata</taxon>
        <taxon>Euteleostomi</taxon>
        <taxon>Mammalia</taxon>
        <taxon>Eutheria</taxon>
        <taxon>Euarchontoglires</taxon>
        <taxon>Glires</taxon>
        <taxon>Rodentia</taxon>
        <taxon>Myomorpha</taxon>
        <taxon>Muroidea</taxon>
        <taxon>Muridae</taxon>
        <taxon>Murinae</taxon>
        <taxon>Rattus</taxon>
    </lineage>
</organism>
<proteinExistence type="evidence at protein level"/>
<gene>
    <name type="primary">Pdgfra</name>
</gene>
<keyword id="KW-0067">ATP-binding</keyword>
<keyword id="KW-1003">Cell membrane</keyword>
<keyword id="KW-0966">Cell projection</keyword>
<keyword id="KW-0145">Chemotaxis</keyword>
<keyword id="KW-0217">Developmental protein</keyword>
<keyword id="KW-0903">Direct protein sequencing</keyword>
<keyword id="KW-1015">Disulfide bond</keyword>
<keyword id="KW-0325">Glycoprotein</keyword>
<keyword id="KW-0333">Golgi apparatus</keyword>
<keyword id="KW-0393">Immunoglobulin domain</keyword>
<keyword id="KW-0418">Kinase</keyword>
<keyword id="KW-0472">Membrane</keyword>
<keyword id="KW-0547">Nucleotide-binding</keyword>
<keyword id="KW-0597">Phosphoprotein</keyword>
<keyword id="KW-0656">Proto-oncogene</keyword>
<keyword id="KW-0675">Receptor</keyword>
<keyword id="KW-1185">Reference proteome</keyword>
<keyword id="KW-0677">Repeat</keyword>
<keyword id="KW-0732">Signal</keyword>
<keyword id="KW-0808">Transferase</keyword>
<keyword id="KW-0812">Transmembrane</keyword>
<keyword id="KW-1133">Transmembrane helix</keyword>
<keyword id="KW-0829">Tyrosine-protein kinase</keyword>
<keyword id="KW-0832">Ubl conjugation</keyword>
<accession>P20786</accession>